<feature type="chain" id="PRO_1000100835" description="Galactokinase">
    <location>
        <begin position="1"/>
        <end position="390"/>
    </location>
</feature>
<feature type="active site" description="Proton acceptor" evidence="1">
    <location>
        <position position="175"/>
    </location>
</feature>
<feature type="binding site" evidence="1">
    <location>
        <begin position="35"/>
        <end position="38"/>
    </location>
    <ligand>
        <name>substrate</name>
    </ligand>
</feature>
<feature type="binding site" evidence="1">
    <location>
        <begin position="125"/>
        <end position="131"/>
    </location>
    <ligand>
        <name>ATP</name>
        <dbReference type="ChEBI" id="CHEBI:30616"/>
    </ligand>
</feature>
<feature type="binding site" evidence="1">
    <location>
        <position position="131"/>
    </location>
    <ligand>
        <name>Mg(2+)</name>
        <dbReference type="ChEBI" id="CHEBI:18420"/>
    </ligand>
</feature>
<feature type="binding site" evidence="1">
    <location>
        <position position="163"/>
    </location>
    <ligand>
        <name>Mg(2+)</name>
        <dbReference type="ChEBI" id="CHEBI:18420"/>
    </ligand>
</feature>
<feature type="binding site" evidence="1">
    <location>
        <position position="224"/>
    </location>
    <ligand>
        <name>substrate</name>
    </ligand>
</feature>
<feature type="site" description="Transition state stabilizer" evidence="1">
    <location>
        <position position="29"/>
    </location>
</feature>
<accession>B4F0A6</accession>
<gene>
    <name evidence="1" type="primary">galK</name>
    <name type="ordered locus">PMI1949</name>
</gene>
<reference key="1">
    <citation type="journal article" date="2008" name="J. Bacteriol.">
        <title>Complete genome sequence of uropathogenic Proteus mirabilis, a master of both adherence and motility.</title>
        <authorList>
            <person name="Pearson M.M."/>
            <person name="Sebaihia M."/>
            <person name="Churcher C."/>
            <person name="Quail M.A."/>
            <person name="Seshasayee A.S."/>
            <person name="Luscombe N.M."/>
            <person name="Abdellah Z."/>
            <person name="Arrosmith C."/>
            <person name="Atkin B."/>
            <person name="Chillingworth T."/>
            <person name="Hauser H."/>
            <person name="Jagels K."/>
            <person name="Moule S."/>
            <person name="Mungall K."/>
            <person name="Norbertczak H."/>
            <person name="Rabbinowitsch E."/>
            <person name="Walker D."/>
            <person name="Whithead S."/>
            <person name="Thomson N.R."/>
            <person name="Rather P.N."/>
            <person name="Parkhill J."/>
            <person name="Mobley H.L.T."/>
        </authorList>
    </citation>
    <scope>NUCLEOTIDE SEQUENCE [LARGE SCALE GENOMIC DNA]</scope>
    <source>
        <strain>HI4320</strain>
    </source>
</reference>
<keyword id="KW-0067">ATP-binding</keyword>
<keyword id="KW-0119">Carbohydrate metabolism</keyword>
<keyword id="KW-0963">Cytoplasm</keyword>
<keyword id="KW-0299">Galactose metabolism</keyword>
<keyword id="KW-0418">Kinase</keyword>
<keyword id="KW-0460">Magnesium</keyword>
<keyword id="KW-0479">Metal-binding</keyword>
<keyword id="KW-0547">Nucleotide-binding</keyword>
<keyword id="KW-1185">Reference proteome</keyword>
<keyword id="KW-0808">Transferase</keyword>
<organism>
    <name type="scientific">Proteus mirabilis (strain HI4320)</name>
    <dbReference type="NCBI Taxonomy" id="529507"/>
    <lineage>
        <taxon>Bacteria</taxon>
        <taxon>Pseudomonadati</taxon>
        <taxon>Pseudomonadota</taxon>
        <taxon>Gammaproteobacteria</taxon>
        <taxon>Enterobacterales</taxon>
        <taxon>Morganellaceae</taxon>
        <taxon>Proteus</taxon>
    </lineage>
</organism>
<name>GAL1_PROMH</name>
<dbReference type="EC" id="2.7.1.6" evidence="1"/>
<dbReference type="EMBL" id="AM942759">
    <property type="protein sequence ID" value="CAR43994.1"/>
    <property type="molecule type" value="Genomic_DNA"/>
</dbReference>
<dbReference type="RefSeq" id="WP_012368170.1">
    <property type="nucleotide sequence ID" value="NC_010554.1"/>
</dbReference>
<dbReference type="SMR" id="B4F0A6"/>
<dbReference type="EnsemblBacteria" id="CAR43994">
    <property type="protein sequence ID" value="CAR43994"/>
    <property type="gene ID" value="PMI1949"/>
</dbReference>
<dbReference type="GeneID" id="6802085"/>
<dbReference type="KEGG" id="pmr:PMI1949"/>
<dbReference type="PATRIC" id="fig|529507.6.peg.1901"/>
<dbReference type="eggNOG" id="COG0153">
    <property type="taxonomic scope" value="Bacteria"/>
</dbReference>
<dbReference type="HOGENOM" id="CLU_017814_2_1_6"/>
<dbReference type="UniPathway" id="UPA00214"/>
<dbReference type="Proteomes" id="UP000008319">
    <property type="component" value="Chromosome"/>
</dbReference>
<dbReference type="GO" id="GO:0005829">
    <property type="term" value="C:cytosol"/>
    <property type="evidence" value="ECO:0007669"/>
    <property type="project" value="TreeGrafter"/>
</dbReference>
<dbReference type="GO" id="GO:0005524">
    <property type="term" value="F:ATP binding"/>
    <property type="evidence" value="ECO:0007669"/>
    <property type="project" value="UniProtKB-UniRule"/>
</dbReference>
<dbReference type="GO" id="GO:0004335">
    <property type="term" value="F:galactokinase activity"/>
    <property type="evidence" value="ECO:0007669"/>
    <property type="project" value="UniProtKB-UniRule"/>
</dbReference>
<dbReference type="GO" id="GO:0000287">
    <property type="term" value="F:magnesium ion binding"/>
    <property type="evidence" value="ECO:0007669"/>
    <property type="project" value="UniProtKB-UniRule"/>
</dbReference>
<dbReference type="GO" id="GO:0006012">
    <property type="term" value="P:galactose metabolic process"/>
    <property type="evidence" value="ECO:0007669"/>
    <property type="project" value="UniProtKB-UniRule"/>
</dbReference>
<dbReference type="FunFam" id="3.30.230.10:FF:000017">
    <property type="entry name" value="Galactokinase"/>
    <property type="match status" value="1"/>
</dbReference>
<dbReference type="FunFam" id="3.30.70.890:FF:000001">
    <property type="entry name" value="Galactokinase"/>
    <property type="match status" value="1"/>
</dbReference>
<dbReference type="Gene3D" id="3.30.230.10">
    <property type="match status" value="1"/>
</dbReference>
<dbReference type="Gene3D" id="3.30.70.890">
    <property type="entry name" value="GHMP kinase, C-terminal domain"/>
    <property type="match status" value="1"/>
</dbReference>
<dbReference type="HAMAP" id="MF_00246">
    <property type="entry name" value="Galactokinase"/>
    <property type="match status" value="1"/>
</dbReference>
<dbReference type="InterPro" id="IPR000705">
    <property type="entry name" value="Galactokinase"/>
</dbReference>
<dbReference type="InterPro" id="IPR022963">
    <property type="entry name" value="Galactokinase_bac"/>
</dbReference>
<dbReference type="InterPro" id="IPR019741">
    <property type="entry name" value="Galactokinase_CS"/>
</dbReference>
<dbReference type="InterPro" id="IPR019539">
    <property type="entry name" value="GalKase_N"/>
</dbReference>
<dbReference type="InterPro" id="IPR013750">
    <property type="entry name" value="GHMP_kinase_C_dom"/>
</dbReference>
<dbReference type="InterPro" id="IPR036554">
    <property type="entry name" value="GHMP_kinase_C_sf"/>
</dbReference>
<dbReference type="InterPro" id="IPR006204">
    <property type="entry name" value="GHMP_kinase_N_dom"/>
</dbReference>
<dbReference type="InterPro" id="IPR006203">
    <property type="entry name" value="GHMP_knse_ATP-bd_CS"/>
</dbReference>
<dbReference type="InterPro" id="IPR006206">
    <property type="entry name" value="Mevalonate/galactokinase"/>
</dbReference>
<dbReference type="InterPro" id="IPR020568">
    <property type="entry name" value="Ribosomal_Su5_D2-typ_SF"/>
</dbReference>
<dbReference type="InterPro" id="IPR014721">
    <property type="entry name" value="Ribsml_uS5_D2-typ_fold_subgr"/>
</dbReference>
<dbReference type="NCBIfam" id="TIGR00131">
    <property type="entry name" value="gal_kin"/>
    <property type="match status" value="1"/>
</dbReference>
<dbReference type="NCBIfam" id="NF003472">
    <property type="entry name" value="PRK05101.1"/>
    <property type="match status" value="1"/>
</dbReference>
<dbReference type="NCBIfam" id="NF003705">
    <property type="entry name" value="PRK05322.1"/>
    <property type="match status" value="1"/>
</dbReference>
<dbReference type="PANTHER" id="PTHR10457:SF7">
    <property type="entry name" value="GALACTOKINASE-RELATED"/>
    <property type="match status" value="1"/>
</dbReference>
<dbReference type="PANTHER" id="PTHR10457">
    <property type="entry name" value="MEVALONATE KINASE/GALACTOKINASE"/>
    <property type="match status" value="1"/>
</dbReference>
<dbReference type="Pfam" id="PF10509">
    <property type="entry name" value="GalKase_gal_bdg"/>
    <property type="match status" value="1"/>
</dbReference>
<dbReference type="Pfam" id="PF08544">
    <property type="entry name" value="GHMP_kinases_C"/>
    <property type="match status" value="1"/>
</dbReference>
<dbReference type="Pfam" id="PF00288">
    <property type="entry name" value="GHMP_kinases_N"/>
    <property type="match status" value="1"/>
</dbReference>
<dbReference type="PIRSF" id="PIRSF000530">
    <property type="entry name" value="Galactokinase"/>
    <property type="match status" value="1"/>
</dbReference>
<dbReference type="PRINTS" id="PR00473">
    <property type="entry name" value="GALCTOKINASE"/>
</dbReference>
<dbReference type="PRINTS" id="PR00959">
    <property type="entry name" value="MEVGALKINASE"/>
</dbReference>
<dbReference type="SUPFAM" id="SSF55060">
    <property type="entry name" value="GHMP Kinase, C-terminal domain"/>
    <property type="match status" value="1"/>
</dbReference>
<dbReference type="SUPFAM" id="SSF54211">
    <property type="entry name" value="Ribosomal protein S5 domain 2-like"/>
    <property type="match status" value="1"/>
</dbReference>
<dbReference type="PROSITE" id="PS00106">
    <property type="entry name" value="GALACTOKINASE"/>
    <property type="match status" value="1"/>
</dbReference>
<dbReference type="PROSITE" id="PS00627">
    <property type="entry name" value="GHMP_KINASES_ATP"/>
    <property type="match status" value="1"/>
</dbReference>
<proteinExistence type="inferred from homology"/>
<protein>
    <recommendedName>
        <fullName evidence="1">Galactokinase</fullName>
        <ecNumber evidence="1">2.7.1.6</ecNumber>
    </recommendedName>
    <alternativeName>
        <fullName evidence="1">Galactose kinase</fullName>
    </alternativeName>
</protein>
<evidence type="ECO:0000255" key="1">
    <source>
        <dbReference type="HAMAP-Rule" id="MF_00246"/>
    </source>
</evidence>
<sequence>MQALINNVTHSFTSIFGYAPTHFIQAPGRVNLIGEHTDYNDGFVLPCAIDYQMVVAAAKRDDNLIRVIAVDYQNAQDQFSLEHPIEFLPNKMWANYIRGVIHFLQQAKYVFQGMDIAITGNVPQGAGLSSSAALEVAIGQTVKTLYQLPISQKEIALNGQKAENQFVGCNCGIMDQLISACGEESHALLIDCRSLATTAVKMPESAVVMIINSNKKRGLVDSEYNTRRQQCEEAAKILNVTALRDATLAQLQAKKALMNDKVYRRARHVITENERTLQAAEALKQGDLTKLSELMAQSHISMRDDFEITVNEVDTLVEIVKSVIGSQGGVRMTGGGFGGCVVALVTPDLVAKVTQAVEAQYKKQTGLKETIYVCSASQGAGYLEITNGIK</sequence>
<comment type="function">
    <text evidence="1">Catalyzes the transfer of the gamma-phosphate of ATP to D-galactose to form alpha-D-galactose-1-phosphate (Gal-1-P).</text>
</comment>
<comment type="catalytic activity">
    <reaction evidence="1">
        <text>alpha-D-galactose + ATP = alpha-D-galactose 1-phosphate + ADP + H(+)</text>
        <dbReference type="Rhea" id="RHEA:13553"/>
        <dbReference type="ChEBI" id="CHEBI:15378"/>
        <dbReference type="ChEBI" id="CHEBI:28061"/>
        <dbReference type="ChEBI" id="CHEBI:30616"/>
        <dbReference type="ChEBI" id="CHEBI:58336"/>
        <dbReference type="ChEBI" id="CHEBI:456216"/>
        <dbReference type="EC" id="2.7.1.6"/>
    </reaction>
</comment>
<comment type="pathway">
    <text evidence="1">Carbohydrate metabolism; galactose metabolism.</text>
</comment>
<comment type="subcellular location">
    <subcellularLocation>
        <location evidence="1">Cytoplasm</location>
    </subcellularLocation>
</comment>
<comment type="similarity">
    <text evidence="1">Belongs to the GHMP kinase family. GalK subfamily.</text>
</comment>